<gene>
    <name evidence="6" type="primary">CYP82C2</name>
    <name evidence="9" type="ordered locus">At4g31970</name>
    <name evidence="10" type="ORF">F10N7.220</name>
</gene>
<evidence type="ECO:0000250" key="1"/>
<evidence type="ECO:0000250" key="2">
    <source>
        <dbReference type="UniProtKB" id="P04798"/>
    </source>
</evidence>
<evidence type="ECO:0000255" key="3"/>
<evidence type="ECO:0000269" key="4">
    <source>
    </source>
</evidence>
<evidence type="ECO:0000269" key="5">
    <source>
    </source>
</evidence>
<evidence type="ECO:0000303" key="6">
    <source>
    </source>
</evidence>
<evidence type="ECO:0000305" key="7"/>
<evidence type="ECO:0000305" key="8">
    <source>
    </source>
</evidence>
<evidence type="ECO:0000312" key="9">
    <source>
        <dbReference type="Araport" id="AT4G31970"/>
    </source>
</evidence>
<evidence type="ECO:0000312" key="10">
    <source>
        <dbReference type="EMBL" id="CAA16592.1"/>
    </source>
</evidence>
<organism>
    <name type="scientific">Arabidopsis thaliana</name>
    <name type="common">Mouse-ear cress</name>
    <dbReference type="NCBI Taxonomy" id="3702"/>
    <lineage>
        <taxon>Eukaryota</taxon>
        <taxon>Viridiplantae</taxon>
        <taxon>Streptophyta</taxon>
        <taxon>Embryophyta</taxon>
        <taxon>Tracheophyta</taxon>
        <taxon>Spermatophyta</taxon>
        <taxon>Magnoliopsida</taxon>
        <taxon>eudicotyledons</taxon>
        <taxon>Gunneridae</taxon>
        <taxon>Pentapetalae</taxon>
        <taxon>rosids</taxon>
        <taxon>malvids</taxon>
        <taxon>Brassicales</taxon>
        <taxon>Brassicaceae</taxon>
        <taxon>Camelineae</taxon>
        <taxon>Arabidopsis</taxon>
    </lineage>
</organism>
<dbReference type="EC" id="1.14.14.-" evidence="4"/>
<dbReference type="EC" id="1.14.14.165" evidence="5"/>
<dbReference type="EMBL" id="AL021636">
    <property type="protein sequence ID" value="CAA16592.1"/>
    <property type="molecule type" value="Genomic_DNA"/>
</dbReference>
<dbReference type="EMBL" id="AL161580">
    <property type="protein sequence ID" value="CAB79915.1"/>
    <property type="molecule type" value="Genomic_DNA"/>
</dbReference>
<dbReference type="EMBL" id="CP002687">
    <property type="protein sequence ID" value="AEE85984.1"/>
    <property type="molecule type" value="Genomic_DNA"/>
</dbReference>
<dbReference type="EMBL" id="DQ653241">
    <property type="protein sequence ID" value="ABK28662.1"/>
    <property type="status" value="ALT_SEQ"/>
    <property type="molecule type" value="mRNA"/>
</dbReference>
<dbReference type="PIR" id="T04648">
    <property type="entry name" value="T04648"/>
</dbReference>
<dbReference type="RefSeq" id="NP_194925.1">
    <property type="nucleotide sequence ID" value="NM_119348.2"/>
</dbReference>
<dbReference type="SMR" id="O49394"/>
<dbReference type="FunCoup" id="O49394">
    <property type="interactions" value="296"/>
</dbReference>
<dbReference type="STRING" id="3702.O49394"/>
<dbReference type="PaxDb" id="3702-AT4G31970.1"/>
<dbReference type="ProteomicsDB" id="239143"/>
<dbReference type="EnsemblPlants" id="AT4G31970.1">
    <property type="protein sequence ID" value="AT4G31970.1"/>
    <property type="gene ID" value="AT4G31970"/>
</dbReference>
<dbReference type="GeneID" id="829327"/>
<dbReference type="Gramene" id="AT4G31970.1">
    <property type="protein sequence ID" value="AT4G31970.1"/>
    <property type="gene ID" value="AT4G31970"/>
</dbReference>
<dbReference type="KEGG" id="ath:AT4G31970"/>
<dbReference type="Araport" id="AT4G31970"/>
<dbReference type="TAIR" id="AT4G31970">
    <property type="gene designation" value="CYP82C2"/>
</dbReference>
<dbReference type="eggNOG" id="KOG0156">
    <property type="taxonomic scope" value="Eukaryota"/>
</dbReference>
<dbReference type="HOGENOM" id="CLU_001570_4_0_1"/>
<dbReference type="InParanoid" id="O49394"/>
<dbReference type="OMA" id="EARQCRK"/>
<dbReference type="OrthoDB" id="2789670at2759"/>
<dbReference type="PhylomeDB" id="O49394"/>
<dbReference type="BioCyc" id="ARA:AT4G31970-MONOMER"/>
<dbReference type="BioCyc" id="MetaCyc:AT4G31970-MONOMER"/>
<dbReference type="BRENDA" id="1.14.14.165">
    <property type="organism ID" value="399"/>
</dbReference>
<dbReference type="PRO" id="PR:O49394"/>
<dbReference type="Proteomes" id="UP000006548">
    <property type="component" value="Chromosome 4"/>
</dbReference>
<dbReference type="ExpressionAtlas" id="O49394">
    <property type="expression patterns" value="baseline and differential"/>
</dbReference>
<dbReference type="GO" id="GO:0016020">
    <property type="term" value="C:membrane"/>
    <property type="evidence" value="ECO:0007669"/>
    <property type="project" value="UniProtKB-SubCell"/>
</dbReference>
<dbReference type="GO" id="GO:0020037">
    <property type="term" value="F:heme binding"/>
    <property type="evidence" value="ECO:0007669"/>
    <property type="project" value="InterPro"/>
</dbReference>
<dbReference type="GO" id="GO:0106149">
    <property type="term" value="F:indole-3-carbonyl nitrile 4-hydroxylase activity"/>
    <property type="evidence" value="ECO:0000314"/>
    <property type="project" value="TAIR"/>
</dbReference>
<dbReference type="GO" id="GO:0005506">
    <property type="term" value="F:iron ion binding"/>
    <property type="evidence" value="ECO:0007669"/>
    <property type="project" value="InterPro"/>
</dbReference>
<dbReference type="GO" id="GO:0004497">
    <property type="term" value="F:monooxygenase activity"/>
    <property type="evidence" value="ECO:0000314"/>
    <property type="project" value="UniProtKB"/>
</dbReference>
<dbReference type="GO" id="GO:0071456">
    <property type="term" value="P:cellular response to hypoxia"/>
    <property type="evidence" value="ECO:0000270"/>
    <property type="project" value="TAIR"/>
</dbReference>
<dbReference type="GO" id="GO:0006952">
    <property type="term" value="P:defense response"/>
    <property type="evidence" value="ECO:0000315"/>
    <property type="project" value="TAIR"/>
</dbReference>
<dbReference type="CDD" id="cd20654">
    <property type="entry name" value="CYP82"/>
    <property type="match status" value="1"/>
</dbReference>
<dbReference type="FunFam" id="1.10.630.10:FF:000026">
    <property type="entry name" value="Cytochrome P450 82C4"/>
    <property type="match status" value="1"/>
</dbReference>
<dbReference type="Gene3D" id="1.10.630.10">
    <property type="entry name" value="Cytochrome P450"/>
    <property type="match status" value="1"/>
</dbReference>
<dbReference type="InterPro" id="IPR001128">
    <property type="entry name" value="Cyt_P450"/>
</dbReference>
<dbReference type="InterPro" id="IPR017972">
    <property type="entry name" value="Cyt_P450_CS"/>
</dbReference>
<dbReference type="InterPro" id="IPR002401">
    <property type="entry name" value="Cyt_P450_E_grp-I"/>
</dbReference>
<dbReference type="InterPro" id="IPR036396">
    <property type="entry name" value="Cyt_P450_sf"/>
</dbReference>
<dbReference type="InterPro" id="IPR050651">
    <property type="entry name" value="Plant_Cytochrome_P450_Monoox"/>
</dbReference>
<dbReference type="PANTHER" id="PTHR47947">
    <property type="entry name" value="CYTOCHROME P450 82C3-RELATED"/>
    <property type="match status" value="1"/>
</dbReference>
<dbReference type="PANTHER" id="PTHR47947:SF19">
    <property type="entry name" value="CYTOCHROME P450 82C3-RELATED"/>
    <property type="match status" value="1"/>
</dbReference>
<dbReference type="Pfam" id="PF00067">
    <property type="entry name" value="p450"/>
    <property type="match status" value="1"/>
</dbReference>
<dbReference type="PRINTS" id="PR00463">
    <property type="entry name" value="EP450I"/>
</dbReference>
<dbReference type="PRINTS" id="PR00385">
    <property type="entry name" value="P450"/>
</dbReference>
<dbReference type="SUPFAM" id="SSF48264">
    <property type="entry name" value="Cytochrome P450"/>
    <property type="match status" value="1"/>
</dbReference>
<dbReference type="PROSITE" id="PS00086">
    <property type="entry name" value="CYTOCHROME_P450"/>
    <property type="match status" value="1"/>
</dbReference>
<proteinExistence type="evidence at protein level"/>
<protein>
    <recommendedName>
        <fullName evidence="8">Xanthotoxin 5-hydroxylase CYP82C2</fullName>
        <shortName evidence="6">8-methoxypsoralen 5-hydroxylase CYP82C2</shortName>
        <ecNumber evidence="4">1.14.14.-</ecNumber>
    </recommendedName>
    <alternativeName>
        <fullName evidence="6">Cytochrome P450 82C2</fullName>
    </alternativeName>
    <alternativeName>
        <fullName>Indole-3-carbonyl nitrile 4-hydroxylase CYP82C2</fullName>
        <ecNumber evidence="5">1.14.14.165</ecNumber>
    </alternativeName>
</protein>
<comment type="function">
    <text evidence="4 5">Involved in the biosynthetic pathway to 4-hydroxyindole-3-carbonyl nitrile (4-OH-ICN), a cyanogenic metabolite required for inducible pathogen defense. Converts indole-3-carbonyl nitrile (ICN) into 4-OH-ICN (PubMed:26352477). Can hydroxylate xanthotoxin (8-methoxypsoralen) to form 5-hydroxyxanthotoxin (5-hydroxy-8-methoxypsoralen) in vivo and in vitro (PubMed:18291319).</text>
</comment>
<comment type="catalytic activity">
    <reaction evidence="4">
        <text>xanthotoxin + reduced [NADPH--hemoprotein reductase] + O2 = 5-hydroxyxanthotoxin + oxidized [NADPH--hemoprotein reductase] + H2O + 2 H(+)</text>
        <dbReference type="Rhea" id="RHEA:58064"/>
        <dbReference type="Rhea" id="RHEA-COMP:11964"/>
        <dbReference type="Rhea" id="RHEA-COMP:11965"/>
        <dbReference type="ChEBI" id="CHEBI:15377"/>
        <dbReference type="ChEBI" id="CHEBI:15378"/>
        <dbReference type="ChEBI" id="CHEBI:15379"/>
        <dbReference type="ChEBI" id="CHEBI:18358"/>
        <dbReference type="ChEBI" id="CHEBI:57618"/>
        <dbReference type="ChEBI" id="CHEBI:58210"/>
        <dbReference type="ChEBI" id="CHEBI:78326"/>
    </reaction>
</comment>
<comment type="catalytic activity">
    <reaction evidence="5">
        <text>indole-3-carbonyl nitrile + reduced [NADPH--hemoprotein reductase] + O2 = 4-hydroxy-indole-3-carbonyl nitrile + oxidized [NADPH--hemoprotein reductase] + H2O + H(+)</text>
        <dbReference type="Rhea" id="RHEA:57864"/>
        <dbReference type="Rhea" id="RHEA-COMP:11964"/>
        <dbReference type="Rhea" id="RHEA-COMP:11965"/>
        <dbReference type="ChEBI" id="CHEBI:15377"/>
        <dbReference type="ChEBI" id="CHEBI:15378"/>
        <dbReference type="ChEBI" id="CHEBI:15379"/>
        <dbReference type="ChEBI" id="CHEBI:57618"/>
        <dbReference type="ChEBI" id="CHEBI:58210"/>
        <dbReference type="ChEBI" id="CHEBI:142138"/>
        <dbReference type="ChEBI" id="CHEBI:142139"/>
        <dbReference type="EC" id="1.14.14.165"/>
    </reaction>
</comment>
<comment type="cofactor">
    <cofactor evidence="1">
        <name>heme</name>
        <dbReference type="ChEBI" id="CHEBI:30413"/>
    </cofactor>
</comment>
<comment type="subcellular location">
    <subcellularLocation>
        <location evidence="7">Membrane</location>
        <topology evidence="7">Single-pass membrane protein</topology>
    </subcellularLocation>
</comment>
<comment type="induction">
    <text evidence="5">Up-regulated upon pathogen infection.</text>
</comment>
<comment type="disruption phenotype">
    <text evidence="5">Increased susceptibility to virulent Pseudomonas syringae.</text>
</comment>
<comment type="miscellaneous">
    <text>Plants overexpressing CYP82C2, can hydroxylate and subsequently glycosylate 8-methoxypsoralen.</text>
</comment>
<comment type="similarity">
    <text evidence="7">Belongs to the cytochrome P450 family.</text>
</comment>
<comment type="sequence caution" evidence="7">
    <conflict type="erroneous termination">
        <sequence resource="EMBL-CDS" id="ABK28662"/>
    </conflict>
    <text>Extended C-terminus.</text>
</comment>
<reference key="1">
    <citation type="journal article" date="1999" name="Nature">
        <title>Sequence and analysis of chromosome 4 of the plant Arabidopsis thaliana.</title>
        <authorList>
            <person name="Mayer K.F.X."/>
            <person name="Schueller C."/>
            <person name="Wambutt R."/>
            <person name="Murphy G."/>
            <person name="Volckaert G."/>
            <person name="Pohl T."/>
            <person name="Duesterhoeft A."/>
            <person name="Stiekema W."/>
            <person name="Entian K.-D."/>
            <person name="Terryn N."/>
            <person name="Harris B."/>
            <person name="Ansorge W."/>
            <person name="Brandt P."/>
            <person name="Grivell L.A."/>
            <person name="Rieger M."/>
            <person name="Weichselgartner M."/>
            <person name="de Simone V."/>
            <person name="Obermaier B."/>
            <person name="Mache R."/>
            <person name="Mueller M."/>
            <person name="Kreis M."/>
            <person name="Delseny M."/>
            <person name="Puigdomenech P."/>
            <person name="Watson M."/>
            <person name="Schmidtheini T."/>
            <person name="Reichert B."/>
            <person name="Portetelle D."/>
            <person name="Perez-Alonso M."/>
            <person name="Boutry M."/>
            <person name="Bancroft I."/>
            <person name="Vos P."/>
            <person name="Hoheisel J."/>
            <person name="Zimmermann W."/>
            <person name="Wedler H."/>
            <person name="Ridley P."/>
            <person name="Langham S.-A."/>
            <person name="McCullagh B."/>
            <person name="Bilham L."/>
            <person name="Robben J."/>
            <person name="van der Schueren J."/>
            <person name="Grymonprez B."/>
            <person name="Chuang Y.-J."/>
            <person name="Vandenbussche F."/>
            <person name="Braeken M."/>
            <person name="Weltjens I."/>
            <person name="Voet M."/>
            <person name="Bastiaens I."/>
            <person name="Aert R."/>
            <person name="Defoor E."/>
            <person name="Weitzenegger T."/>
            <person name="Bothe G."/>
            <person name="Ramsperger U."/>
            <person name="Hilbert H."/>
            <person name="Braun M."/>
            <person name="Holzer E."/>
            <person name="Brandt A."/>
            <person name="Peters S."/>
            <person name="van Staveren M."/>
            <person name="Dirkse W."/>
            <person name="Mooijman P."/>
            <person name="Klein Lankhorst R."/>
            <person name="Rose M."/>
            <person name="Hauf J."/>
            <person name="Koetter P."/>
            <person name="Berneiser S."/>
            <person name="Hempel S."/>
            <person name="Feldpausch M."/>
            <person name="Lamberth S."/>
            <person name="Van den Daele H."/>
            <person name="De Keyser A."/>
            <person name="Buysshaert C."/>
            <person name="Gielen J."/>
            <person name="Villarroel R."/>
            <person name="De Clercq R."/>
            <person name="van Montagu M."/>
            <person name="Rogers J."/>
            <person name="Cronin A."/>
            <person name="Quail M.A."/>
            <person name="Bray-Allen S."/>
            <person name="Clark L."/>
            <person name="Doggett J."/>
            <person name="Hall S."/>
            <person name="Kay M."/>
            <person name="Lennard N."/>
            <person name="McLay K."/>
            <person name="Mayes R."/>
            <person name="Pettett A."/>
            <person name="Rajandream M.A."/>
            <person name="Lyne M."/>
            <person name="Benes V."/>
            <person name="Rechmann S."/>
            <person name="Borkova D."/>
            <person name="Bloecker H."/>
            <person name="Scharfe M."/>
            <person name="Grimm M."/>
            <person name="Loehnert T.-H."/>
            <person name="Dose S."/>
            <person name="de Haan M."/>
            <person name="Maarse A.C."/>
            <person name="Schaefer M."/>
            <person name="Mueller-Auer S."/>
            <person name="Gabel C."/>
            <person name="Fuchs M."/>
            <person name="Fartmann B."/>
            <person name="Granderath K."/>
            <person name="Dauner D."/>
            <person name="Herzl A."/>
            <person name="Neumann S."/>
            <person name="Argiriou A."/>
            <person name="Vitale D."/>
            <person name="Liguori R."/>
            <person name="Piravandi E."/>
            <person name="Massenet O."/>
            <person name="Quigley F."/>
            <person name="Clabauld G."/>
            <person name="Muendlein A."/>
            <person name="Felber R."/>
            <person name="Schnabl S."/>
            <person name="Hiller R."/>
            <person name="Schmidt W."/>
            <person name="Lecharny A."/>
            <person name="Aubourg S."/>
            <person name="Chefdor F."/>
            <person name="Cooke R."/>
            <person name="Berger C."/>
            <person name="Monfort A."/>
            <person name="Casacuberta E."/>
            <person name="Gibbons T."/>
            <person name="Weber N."/>
            <person name="Vandenbol M."/>
            <person name="Bargues M."/>
            <person name="Terol J."/>
            <person name="Torres A."/>
            <person name="Perez-Perez A."/>
            <person name="Purnelle B."/>
            <person name="Bent E."/>
            <person name="Johnson S."/>
            <person name="Tacon D."/>
            <person name="Jesse T."/>
            <person name="Heijnen L."/>
            <person name="Schwarz S."/>
            <person name="Scholler P."/>
            <person name="Heber S."/>
            <person name="Francs P."/>
            <person name="Bielke C."/>
            <person name="Frishman D."/>
            <person name="Haase D."/>
            <person name="Lemcke K."/>
            <person name="Mewes H.-W."/>
            <person name="Stocker S."/>
            <person name="Zaccaria P."/>
            <person name="Bevan M."/>
            <person name="Wilson R.K."/>
            <person name="de la Bastide M."/>
            <person name="Habermann K."/>
            <person name="Parnell L."/>
            <person name="Dedhia N."/>
            <person name="Gnoj L."/>
            <person name="Schutz K."/>
            <person name="Huang E."/>
            <person name="Spiegel L."/>
            <person name="Sekhon M."/>
            <person name="Murray J."/>
            <person name="Sheet P."/>
            <person name="Cordes M."/>
            <person name="Abu-Threideh J."/>
            <person name="Stoneking T."/>
            <person name="Kalicki J."/>
            <person name="Graves T."/>
            <person name="Harmon G."/>
            <person name="Edwards J."/>
            <person name="Latreille P."/>
            <person name="Courtney L."/>
            <person name="Cloud J."/>
            <person name="Abbott A."/>
            <person name="Scott K."/>
            <person name="Johnson D."/>
            <person name="Minx P."/>
            <person name="Bentley D."/>
            <person name="Fulton B."/>
            <person name="Miller N."/>
            <person name="Greco T."/>
            <person name="Kemp K."/>
            <person name="Kramer J."/>
            <person name="Fulton L."/>
            <person name="Mardis E."/>
            <person name="Dante M."/>
            <person name="Pepin K."/>
            <person name="Hillier L.W."/>
            <person name="Nelson J."/>
            <person name="Spieth J."/>
            <person name="Ryan E."/>
            <person name="Andrews S."/>
            <person name="Geisel C."/>
            <person name="Layman D."/>
            <person name="Du H."/>
            <person name="Ali J."/>
            <person name="Berghoff A."/>
            <person name="Jones K."/>
            <person name="Drone K."/>
            <person name="Cotton M."/>
            <person name="Joshu C."/>
            <person name="Antonoiu B."/>
            <person name="Zidanic M."/>
            <person name="Strong C."/>
            <person name="Sun H."/>
            <person name="Lamar B."/>
            <person name="Yordan C."/>
            <person name="Ma P."/>
            <person name="Zhong J."/>
            <person name="Preston R."/>
            <person name="Vil D."/>
            <person name="Shekher M."/>
            <person name="Matero A."/>
            <person name="Shah R."/>
            <person name="Swaby I.K."/>
            <person name="O'Shaughnessy A."/>
            <person name="Rodriguez M."/>
            <person name="Hoffman J."/>
            <person name="Till S."/>
            <person name="Granat S."/>
            <person name="Shohdy N."/>
            <person name="Hasegawa A."/>
            <person name="Hameed A."/>
            <person name="Lodhi M."/>
            <person name="Johnson A."/>
            <person name="Chen E."/>
            <person name="Marra M.A."/>
            <person name="Martienssen R."/>
            <person name="McCombie W.R."/>
        </authorList>
    </citation>
    <scope>NUCLEOTIDE SEQUENCE [LARGE SCALE GENOMIC DNA]</scope>
    <source>
        <strain>cv. Columbia</strain>
    </source>
</reference>
<reference key="2">
    <citation type="journal article" date="2017" name="Plant J.">
        <title>Araport11: a complete reannotation of the Arabidopsis thaliana reference genome.</title>
        <authorList>
            <person name="Cheng C.Y."/>
            <person name="Krishnakumar V."/>
            <person name="Chan A.P."/>
            <person name="Thibaud-Nissen F."/>
            <person name="Schobel S."/>
            <person name="Town C.D."/>
        </authorList>
    </citation>
    <scope>GENOME REANNOTATION</scope>
    <source>
        <strain>cv. Columbia</strain>
    </source>
</reference>
<reference key="3">
    <citation type="journal article" date="2006" name="Plant Biotechnol. J.">
        <title>Simultaneous high-throughput recombinational cloning of open reading frames in closed and open configurations.</title>
        <authorList>
            <person name="Underwood B.A."/>
            <person name="Vanderhaeghen R."/>
            <person name="Whitford R."/>
            <person name="Town C.D."/>
            <person name="Hilson P."/>
        </authorList>
    </citation>
    <scope>NUCLEOTIDE SEQUENCE [LARGE SCALE MRNA]</scope>
    <source>
        <strain>cv. Columbia</strain>
    </source>
</reference>
<reference key="4">
    <citation type="journal article" date="2008" name="Chem. Biol.">
        <title>In planta biocatalysis screen of P450s identifies 8-methoxypsoralen as a substrate for the CYP82C subfamily, yielding original chemical structures.</title>
        <authorList>
            <person name="Kruse T."/>
            <person name="Ho K."/>
            <person name="Yoo H.D."/>
            <person name="Johnson T."/>
            <person name="Hippely M."/>
            <person name="Park J.H."/>
            <person name="Flavell R."/>
            <person name="Bobzin S."/>
        </authorList>
    </citation>
    <scope>FUNCTION</scope>
    <scope>CATALYTIC ACTIVITY</scope>
</reference>
<reference key="5">
    <citation type="journal article" date="2015" name="Nature">
        <title>A new cyanogenic metabolite in Arabidopsis required for inducible pathogen defence.</title>
        <authorList>
            <person name="Rajniak J."/>
            <person name="Barco B."/>
            <person name="Clay N.K."/>
            <person name="Sattely E.S."/>
        </authorList>
    </citation>
    <scope>FUNCTION</scope>
    <scope>INDUCTION BY PATHOGEN</scope>
    <scope>DISRUPTION PHENOTYPE</scope>
    <scope>CATALYTIC ACTIVITY</scope>
</reference>
<keyword id="KW-0349">Heme</keyword>
<keyword id="KW-0408">Iron</keyword>
<keyword id="KW-0472">Membrane</keyword>
<keyword id="KW-0479">Metal-binding</keyword>
<keyword id="KW-0503">Monooxygenase</keyword>
<keyword id="KW-0560">Oxidoreductase</keyword>
<keyword id="KW-1185">Reference proteome</keyword>
<keyword id="KW-0812">Transmembrane</keyword>
<keyword id="KW-1133">Transmembrane helix</keyword>
<sequence length="523" mass="59002">MDTSLFSLFVPILVFVFIALFKKSKKPKHVKAPAPSGAWPIIGHLHLLSGKEQLLYRTLGKMADQYGPAMSLRLGSSETFVVSSFEVAKDCFTVNDKALASRPITAAAKHMGYDCAVFGFAPYSAFWREMRKIATLELLSNRRLQMLKHVRVSEISMVMQDLYSLWVKKGGSEPVMVDLKSWLEDMSLNMMVRMVAGKRYFGGGSLSPEDAEEARQCRKGVANFFHLVGIFTVSDAFPKLGWFDFQGHEKEMKQTGRELDVILERWIENHRQQRKVSGTKHNDSDFVDVMLSLAEQGKFSHLQHDAITSIKSTCLALILGGSETSPSTLTWAISLLLNNKDMLKKAQDEIDIHVGRDRNVEDSDIENLVYIQAIIKETLRLYPAGPLLGHREAIEDCTVAGYNVRRGTRMLVNVWKIQRDPRVYMEPNEFRPERFITGEAKEFDVRGQNFELMPFGSGRRSCPGSSLAMQVLHLGLARFLQSFDVKTVMDMPVDMTESPGLTIPKATPLEILISPRLKEGLYV</sequence>
<accession>O49394</accession>
<accession>A0MFB5</accession>
<name>C82C2_ARATH</name>
<feature type="chain" id="PRO_0000411197" description="Xanthotoxin 5-hydroxylase CYP82C2">
    <location>
        <begin position="1"/>
        <end position="523"/>
    </location>
</feature>
<feature type="transmembrane region" description="Helical" evidence="3">
    <location>
        <begin position="1"/>
        <end position="21"/>
    </location>
</feature>
<feature type="binding site" description="axial binding residue" evidence="2">
    <location>
        <position position="462"/>
    </location>
    <ligand>
        <name>heme</name>
        <dbReference type="ChEBI" id="CHEBI:30413"/>
    </ligand>
    <ligandPart>
        <name>Fe</name>
        <dbReference type="ChEBI" id="CHEBI:18248"/>
    </ligandPart>
</feature>